<evidence type="ECO:0000255" key="1">
    <source>
        <dbReference type="HAMAP-Rule" id="MF_00300"/>
    </source>
</evidence>
<comment type="function">
    <text evidence="1">Catalyzes the anti-1,4-elimination of the C-3 phosphate and the C-6 proR hydrogen from 5-enolpyruvylshikimate-3-phosphate (EPSP) to yield chorismate, which is the branch point compound that serves as the starting substrate for the three terminal pathways of aromatic amino acid biosynthesis. This reaction introduces a second double bond into the aromatic ring system.</text>
</comment>
<comment type="catalytic activity">
    <reaction evidence="1">
        <text>5-O-(1-carboxyvinyl)-3-phosphoshikimate = chorismate + phosphate</text>
        <dbReference type="Rhea" id="RHEA:21020"/>
        <dbReference type="ChEBI" id="CHEBI:29748"/>
        <dbReference type="ChEBI" id="CHEBI:43474"/>
        <dbReference type="ChEBI" id="CHEBI:57701"/>
        <dbReference type="EC" id="4.2.3.5"/>
    </reaction>
</comment>
<comment type="cofactor">
    <cofactor evidence="1">
        <name>FMNH2</name>
        <dbReference type="ChEBI" id="CHEBI:57618"/>
    </cofactor>
    <text evidence="1">Reduced FMN (FMNH(2)).</text>
</comment>
<comment type="pathway">
    <text evidence="1">Metabolic intermediate biosynthesis; chorismate biosynthesis; chorismate from D-erythrose 4-phosphate and phosphoenolpyruvate: step 7/7.</text>
</comment>
<comment type="subunit">
    <text evidence="1">Homotetramer.</text>
</comment>
<comment type="similarity">
    <text evidence="1">Belongs to the chorismate synthase family.</text>
</comment>
<accession>Q87DS4</accession>
<proteinExistence type="inferred from homology"/>
<gene>
    <name evidence="1" type="primary">aroC</name>
    <name type="ordered locus">PD_0607</name>
</gene>
<dbReference type="EC" id="4.2.3.5" evidence="1"/>
<dbReference type="EMBL" id="AE009442">
    <property type="protein sequence ID" value="AAO28479.1"/>
    <property type="molecule type" value="Genomic_DNA"/>
</dbReference>
<dbReference type="RefSeq" id="WP_004090653.1">
    <property type="nucleotide sequence ID" value="NC_004556.1"/>
</dbReference>
<dbReference type="SMR" id="Q87DS4"/>
<dbReference type="GeneID" id="93904324"/>
<dbReference type="KEGG" id="xft:PD_0607"/>
<dbReference type="HOGENOM" id="CLU_034547_0_2_6"/>
<dbReference type="UniPathway" id="UPA00053">
    <property type="reaction ID" value="UER00090"/>
</dbReference>
<dbReference type="Proteomes" id="UP000002516">
    <property type="component" value="Chromosome"/>
</dbReference>
<dbReference type="GO" id="GO:0005829">
    <property type="term" value="C:cytosol"/>
    <property type="evidence" value="ECO:0007669"/>
    <property type="project" value="TreeGrafter"/>
</dbReference>
<dbReference type="GO" id="GO:0004107">
    <property type="term" value="F:chorismate synthase activity"/>
    <property type="evidence" value="ECO:0007669"/>
    <property type="project" value="UniProtKB-UniRule"/>
</dbReference>
<dbReference type="GO" id="GO:0010181">
    <property type="term" value="F:FMN binding"/>
    <property type="evidence" value="ECO:0007669"/>
    <property type="project" value="TreeGrafter"/>
</dbReference>
<dbReference type="GO" id="GO:0008652">
    <property type="term" value="P:amino acid biosynthetic process"/>
    <property type="evidence" value="ECO:0007669"/>
    <property type="project" value="UniProtKB-KW"/>
</dbReference>
<dbReference type="GO" id="GO:0009073">
    <property type="term" value="P:aromatic amino acid family biosynthetic process"/>
    <property type="evidence" value="ECO:0007669"/>
    <property type="project" value="UniProtKB-KW"/>
</dbReference>
<dbReference type="GO" id="GO:0009423">
    <property type="term" value="P:chorismate biosynthetic process"/>
    <property type="evidence" value="ECO:0007669"/>
    <property type="project" value="UniProtKB-UniRule"/>
</dbReference>
<dbReference type="CDD" id="cd07304">
    <property type="entry name" value="Chorismate_synthase"/>
    <property type="match status" value="1"/>
</dbReference>
<dbReference type="FunFam" id="3.60.150.10:FF:000001">
    <property type="entry name" value="Chorismate synthase"/>
    <property type="match status" value="1"/>
</dbReference>
<dbReference type="Gene3D" id="3.60.150.10">
    <property type="entry name" value="Chorismate synthase AroC"/>
    <property type="match status" value="1"/>
</dbReference>
<dbReference type="HAMAP" id="MF_00300">
    <property type="entry name" value="Chorismate_synth"/>
    <property type="match status" value="1"/>
</dbReference>
<dbReference type="InterPro" id="IPR000453">
    <property type="entry name" value="Chorismate_synth"/>
</dbReference>
<dbReference type="InterPro" id="IPR035904">
    <property type="entry name" value="Chorismate_synth_AroC_sf"/>
</dbReference>
<dbReference type="InterPro" id="IPR020541">
    <property type="entry name" value="Chorismate_synthase_CS"/>
</dbReference>
<dbReference type="NCBIfam" id="TIGR00033">
    <property type="entry name" value="aroC"/>
    <property type="match status" value="1"/>
</dbReference>
<dbReference type="NCBIfam" id="NF003793">
    <property type="entry name" value="PRK05382.1"/>
    <property type="match status" value="1"/>
</dbReference>
<dbReference type="PANTHER" id="PTHR21085">
    <property type="entry name" value="CHORISMATE SYNTHASE"/>
    <property type="match status" value="1"/>
</dbReference>
<dbReference type="PANTHER" id="PTHR21085:SF0">
    <property type="entry name" value="CHORISMATE SYNTHASE"/>
    <property type="match status" value="1"/>
</dbReference>
<dbReference type="Pfam" id="PF01264">
    <property type="entry name" value="Chorismate_synt"/>
    <property type="match status" value="1"/>
</dbReference>
<dbReference type="PIRSF" id="PIRSF001456">
    <property type="entry name" value="Chorismate_synth"/>
    <property type="match status" value="1"/>
</dbReference>
<dbReference type="SUPFAM" id="SSF103263">
    <property type="entry name" value="Chorismate synthase, AroC"/>
    <property type="match status" value="1"/>
</dbReference>
<dbReference type="PROSITE" id="PS00787">
    <property type="entry name" value="CHORISMATE_SYNTHASE_1"/>
    <property type="match status" value="1"/>
</dbReference>
<dbReference type="PROSITE" id="PS00788">
    <property type="entry name" value="CHORISMATE_SYNTHASE_2"/>
    <property type="match status" value="1"/>
</dbReference>
<dbReference type="PROSITE" id="PS00789">
    <property type="entry name" value="CHORISMATE_SYNTHASE_3"/>
    <property type="match status" value="1"/>
</dbReference>
<keyword id="KW-0028">Amino-acid biosynthesis</keyword>
<keyword id="KW-0057">Aromatic amino acid biosynthesis</keyword>
<keyword id="KW-0274">FAD</keyword>
<keyword id="KW-0285">Flavoprotein</keyword>
<keyword id="KW-0288">FMN</keyword>
<keyword id="KW-0456">Lyase</keyword>
<keyword id="KW-0521">NADP</keyword>
<keyword id="KW-1185">Reference proteome</keyword>
<reference key="1">
    <citation type="journal article" date="2003" name="J. Bacteriol.">
        <title>Comparative analyses of the complete genome sequences of Pierce's disease and citrus variegated chlorosis strains of Xylella fastidiosa.</title>
        <authorList>
            <person name="Van Sluys M.A."/>
            <person name="de Oliveira M.C."/>
            <person name="Monteiro-Vitorello C.B."/>
            <person name="Miyaki C.Y."/>
            <person name="Furlan L.R."/>
            <person name="Camargo L.E.A."/>
            <person name="da Silva A.C.R."/>
            <person name="Moon D.H."/>
            <person name="Takita M.A."/>
            <person name="Lemos E.G.M."/>
            <person name="Machado M.A."/>
            <person name="Ferro M.I.T."/>
            <person name="da Silva F.R."/>
            <person name="Goldman M.H.S."/>
            <person name="Goldman G.H."/>
            <person name="Lemos M.V.F."/>
            <person name="El-Dorry H."/>
            <person name="Tsai S.M."/>
            <person name="Carrer H."/>
            <person name="Carraro D.M."/>
            <person name="de Oliveira R.C."/>
            <person name="Nunes L.R."/>
            <person name="Siqueira W.J."/>
            <person name="Coutinho L.L."/>
            <person name="Kimura E.T."/>
            <person name="Ferro E.S."/>
            <person name="Harakava R."/>
            <person name="Kuramae E.E."/>
            <person name="Marino C.L."/>
            <person name="Giglioti E."/>
            <person name="Abreu I.L."/>
            <person name="Alves L.M.C."/>
            <person name="do Amaral A.M."/>
            <person name="Baia G.S."/>
            <person name="Blanco S.R."/>
            <person name="Brito M.S."/>
            <person name="Cannavan F.S."/>
            <person name="Celestino A.V."/>
            <person name="da Cunha A.F."/>
            <person name="Fenille R.C."/>
            <person name="Ferro J.A."/>
            <person name="Formighieri E.F."/>
            <person name="Kishi L.T."/>
            <person name="Leoni S.G."/>
            <person name="Oliveira A.R."/>
            <person name="Rosa V.E. Jr."/>
            <person name="Sassaki F.T."/>
            <person name="Sena J.A.D."/>
            <person name="de Souza A.A."/>
            <person name="Truffi D."/>
            <person name="Tsukumo F."/>
            <person name="Yanai G.M."/>
            <person name="Zaros L.G."/>
            <person name="Civerolo E.L."/>
            <person name="Simpson A.J.G."/>
            <person name="Almeida N.F. Jr."/>
            <person name="Setubal J.C."/>
            <person name="Kitajima J.P."/>
        </authorList>
    </citation>
    <scope>NUCLEOTIDE SEQUENCE [LARGE SCALE GENOMIC DNA]</scope>
    <source>
        <strain>Temecula1 / ATCC 700964</strain>
    </source>
</reference>
<feature type="chain" id="PRO_0000140682" description="Chorismate synthase">
    <location>
        <begin position="1"/>
        <end position="372"/>
    </location>
</feature>
<feature type="binding site" evidence="1">
    <location>
        <position position="48"/>
    </location>
    <ligand>
        <name>NADP(+)</name>
        <dbReference type="ChEBI" id="CHEBI:58349"/>
    </ligand>
</feature>
<feature type="binding site" evidence="1">
    <location>
        <position position="54"/>
    </location>
    <ligand>
        <name>NADP(+)</name>
        <dbReference type="ChEBI" id="CHEBI:58349"/>
    </ligand>
</feature>
<feature type="binding site" evidence="1">
    <location>
        <begin position="125"/>
        <end position="127"/>
    </location>
    <ligand>
        <name>FMN</name>
        <dbReference type="ChEBI" id="CHEBI:58210"/>
    </ligand>
</feature>
<feature type="binding site" evidence="1">
    <location>
        <begin position="238"/>
        <end position="239"/>
    </location>
    <ligand>
        <name>FMN</name>
        <dbReference type="ChEBI" id="CHEBI:58210"/>
    </ligand>
</feature>
<feature type="binding site" evidence="1">
    <location>
        <position position="278"/>
    </location>
    <ligand>
        <name>FMN</name>
        <dbReference type="ChEBI" id="CHEBI:58210"/>
    </ligand>
</feature>
<feature type="binding site" evidence="1">
    <location>
        <begin position="293"/>
        <end position="297"/>
    </location>
    <ligand>
        <name>FMN</name>
        <dbReference type="ChEBI" id="CHEBI:58210"/>
    </ligand>
</feature>
<feature type="binding site" evidence="1">
    <location>
        <position position="319"/>
    </location>
    <ligand>
        <name>FMN</name>
        <dbReference type="ChEBI" id="CHEBI:58210"/>
    </ligand>
</feature>
<organism>
    <name type="scientific">Xylella fastidiosa (strain Temecula1 / ATCC 700964)</name>
    <dbReference type="NCBI Taxonomy" id="183190"/>
    <lineage>
        <taxon>Bacteria</taxon>
        <taxon>Pseudomonadati</taxon>
        <taxon>Pseudomonadota</taxon>
        <taxon>Gammaproteobacteria</taxon>
        <taxon>Lysobacterales</taxon>
        <taxon>Lysobacteraceae</taxon>
        <taxon>Xylella</taxon>
    </lineage>
</organism>
<name>AROC_XYLFT</name>
<sequence>MGANTFGKLLAVTTFGESHGPAIGCVIDGCPPGLELAAEEFAHDLQRRATGRSRHTSARREADEVEILSGVYEGLTTGTPIALLIRNTDQRSKDYATIARQFRPGHADYTYWQKYGIRDPRGGGRSSARETTMRVAAAVVAKKWLQQRYGVTVRGFLSQLGEIRPEGFAWDAIEDNPFFWPHAAQVPALEAYMDALRKSGDSVGARVDVVAEGVPPGWGEPIYGKLDGELAAALMGINAVKGVEIGAGFGSAVQKGTEHRDLMTPLGFLSNHAGGIIGGIATGQPIIVSIALKPTSSLRLPGETVDVDGCAVQVITKGRHDPCVGIRAPPIAEAMVALVLMDQALRHRAQCGDVGEMSPCIPEGVGLRNADD</sequence>
<protein>
    <recommendedName>
        <fullName evidence="1">Chorismate synthase</fullName>
        <shortName evidence="1">CS</shortName>
        <ecNumber evidence="1">4.2.3.5</ecNumber>
    </recommendedName>
    <alternativeName>
        <fullName evidence="1">5-enolpyruvylshikimate-3-phosphate phospholyase</fullName>
    </alternativeName>
</protein>